<accession>B0V681</accession>
<feature type="chain" id="PRO_1000097642" description="Ribose-5-phosphate isomerase A">
    <location>
        <begin position="1"/>
        <end position="223"/>
    </location>
</feature>
<feature type="active site" description="Proton acceptor" evidence="1">
    <location>
        <position position="105"/>
    </location>
</feature>
<feature type="binding site" evidence="1">
    <location>
        <begin position="32"/>
        <end position="35"/>
    </location>
    <ligand>
        <name>substrate</name>
    </ligand>
</feature>
<feature type="binding site" evidence="1">
    <location>
        <begin position="83"/>
        <end position="86"/>
    </location>
    <ligand>
        <name>substrate</name>
    </ligand>
</feature>
<feature type="binding site" evidence="1">
    <location>
        <begin position="96"/>
        <end position="99"/>
    </location>
    <ligand>
        <name>substrate</name>
    </ligand>
</feature>
<feature type="binding site" evidence="1">
    <location>
        <position position="123"/>
    </location>
    <ligand>
        <name>substrate</name>
    </ligand>
</feature>
<keyword id="KW-0413">Isomerase</keyword>
<comment type="function">
    <text evidence="1">Catalyzes the reversible conversion of ribose-5-phosphate to ribulose 5-phosphate.</text>
</comment>
<comment type="catalytic activity">
    <reaction evidence="1">
        <text>aldehydo-D-ribose 5-phosphate = D-ribulose 5-phosphate</text>
        <dbReference type="Rhea" id="RHEA:14657"/>
        <dbReference type="ChEBI" id="CHEBI:58121"/>
        <dbReference type="ChEBI" id="CHEBI:58273"/>
        <dbReference type="EC" id="5.3.1.6"/>
    </reaction>
</comment>
<comment type="pathway">
    <text evidence="1">Carbohydrate degradation; pentose phosphate pathway; D-ribose 5-phosphate from D-ribulose 5-phosphate (non-oxidative stage): step 1/1.</text>
</comment>
<comment type="subunit">
    <text evidence="1">Homodimer.</text>
</comment>
<comment type="similarity">
    <text evidence="1">Belongs to the ribose 5-phosphate isomerase family.</text>
</comment>
<reference key="1">
    <citation type="journal article" date="2008" name="PLoS ONE">
        <title>Comparative analysis of Acinetobacters: three genomes for three lifestyles.</title>
        <authorList>
            <person name="Vallenet D."/>
            <person name="Nordmann P."/>
            <person name="Barbe V."/>
            <person name="Poirel L."/>
            <person name="Mangenot S."/>
            <person name="Bataille E."/>
            <person name="Dossat C."/>
            <person name="Gas S."/>
            <person name="Kreimeyer A."/>
            <person name="Lenoble P."/>
            <person name="Oztas S."/>
            <person name="Poulain J."/>
            <person name="Segurens B."/>
            <person name="Robert C."/>
            <person name="Abergel C."/>
            <person name="Claverie J.-M."/>
            <person name="Raoult D."/>
            <person name="Medigue C."/>
            <person name="Weissenbach J."/>
            <person name="Cruveiller S."/>
        </authorList>
    </citation>
    <scope>NUCLEOTIDE SEQUENCE [LARGE SCALE GENOMIC DNA]</scope>
    <source>
        <strain>AYE</strain>
    </source>
</reference>
<sequence length="223" mass="23707">MSLYATQDEKKQAAAKAALKHLPKGGILGVGTGSTVNFLIDLLPELQLEAAVASSQATADRLKKLGIEVVDMNHVGSLDAYVDGADEIDRHMHMIKGGGAALTREKIVASIAKKFVCIVDDSKWVDQLGRDFPLPVEVIPMARSAVARKLVSLGGDPVYREGVVTDNGNVILDVFNLNILNAIDLEKTINNIPGVVTNGIFALNPATIAIVATNDGIEERTAQ</sequence>
<dbReference type="EC" id="5.3.1.6" evidence="1"/>
<dbReference type="EMBL" id="CU459141">
    <property type="protein sequence ID" value="CAM86542.1"/>
    <property type="molecule type" value="Genomic_DNA"/>
</dbReference>
<dbReference type="RefSeq" id="WP_000061059.1">
    <property type="nucleotide sequence ID" value="NZ_JBDGFB010000010.1"/>
</dbReference>
<dbReference type="SMR" id="B0V681"/>
<dbReference type="EnsemblBacteria" id="CAM86542">
    <property type="protein sequence ID" value="CAM86542"/>
    <property type="gene ID" value="ABAYE1650"/>
</dbReference>
<dbReference type="KEGG" id="aby:ABAYE1650"/>
<dbReference type="HOGENOM" id="CLU_056590_1_1_6"/>
<dbReference type="UniPathway" id="UPA00115">
    <property type="reaction ID" value="UER00412"/>
</dbReference>
<dbReference type="GO" id="GO:0005829">
    <property type="term" value="C:cytosol"/>
    <property type="evidence" value="ECO:0007669"/>
    <property type="project" value="TreeGrafter"/>
</dbReference>
<dbReference type="GO" id="GO:0004751">
    <property type="term" value="F:ribose-5-phosphate isomerase activity"/>
    <property type="evidence" value="ECO:0007669"/>
    <property type="project" value="UniProtKB-UniRule"/>
</dbReference>
<dbReference type="GO" id="GO:0006014">
    <property type="term" value="P:D-ribose metabolic process"/>
    <property type="evidence" value="ECO:0007669"/>
    <property type="project" value="TreeGrafter"/>
</dbReference>
<dbReference type="GO" id="GO:0009052">
    <property type="term" value="P:pentose-phosphate shunt, non-oxidative branch"/>
    <property type="evidence" value="ECO:0007669"/>
    <property type="project" value="UniProtKB-UniRule"/>
</dbReference>
<dbReference type="CDD" id="cd01398">
    <property type="entry name" value="RPI_A"/>
    <property type="match status" value="1"/>
</dbReference>
<dbReference type="FunFam" id="3.30.70.260:FF:000004">
    <property type="entry name" value="Ribose-5-phosphate isomerase A"/>
    <property type="match status" value="1"/>
</dbReference>
<dbReference type="FunFam" id="3.40.50.1360:FF:000001">
    <property type="entry name" value="Ribose-5-phosphate isomerase A"/>
    <property type="match status" value="1"/>
</dbReference>
<dbReference type="Gene3D" id="3.30.70.260">
    <property type="match status" value="1"/>
</dbReference>
<dbReference type="Gene3D" id="3.40.50.1360">
    <property type="match status" value="1"/>
</dbReference>
<dbReference type="HAMAP" id="MF_00170">
    <property type="entry name" value="Rib_5P_isom_A"/>
    <property type="match status" value="1"/>
</dbReference>
<dbReference type="InterPro" id="IPR037171">
    <property type="entry name" value="NagB/RpiA_transferase-like"/>
</dbReference>
<dbReference type="InterPro" id="IPR020672">
    <property type="entry name" value="Ribose5P_isomerase_typA_subgr"/>
</dbReference>
<dbReference type="InterPro" id="IPR004788">
    <property type="entry name" value="Ribose5P_isomerase_type_A"/>
</dbReference>
<dbReference type="NCBIfam" id="NF001924">
    <property type="entry name" value="PRK00702.1"/>
    <property type="match status" value="1"/>
</dbReference>
<dbReference type="NCBIfam" id="TIGR00021">
    <property type="entry name" value="rpiA"/>
    <property type="match status" value="1"/>
</dbReference>
<dbReference type="PANTHER" id="PTHR11934">
    <property type="entry name" value="RIBOSE-5-PHOSPHATE ISOMERASE"/>
    <property type="match status" value="1"/>
</dbReference>
<dbReference type="PANTHER" id="PTHR11934:SF0">
    <property type="entry name" value="RIBOSE-5-PHOSPHATE ISOMERASE"/>
    <property type="match status" value="1"/>
</dbReference>
<dbReference type="Pfam" id="PF06026">
    <property type="entry name" value="Rib_5-P_isom_A"/>
    <property type="match status" value="1"/>
</dbReference>
<dbReference type="SUPFAM" id="SSF75445">
    <property type="entry name" value="D-ribose-5-phosphate isomerase (RpiA), lid domain"/>
    <property type="match status" value="1"/>
</dbReference>
<dbReference type="SUPFAM" id="SSF100950">
    <property type="entry name" value="NagB/RpiA/CoA transferase-like"/>
    <property type="match status" value="1"/>
</dbReference>
<organism>
    <name type="scientific">Acinetobacter baumannii (strain AYE)</name>
    <dbReference type="NCBI Taxonomy" id="509173"/>
    <lineage>
        <taxon>Bacteria</taxon>
        <taxon>Pseudomonadati</taxon>
        <taxon>Pseudomonadota</taxon>
        <taxon>Gammaproteobacteria</taxon>
        <taxon>Moraxellales</taxon>
        <taxon>Moraxellaceae</taxon>
        <taxon>Acinetobacter</taxon>
        <taxon>Acinetobacter calcoaceticus/baumannii complex</taxon>
    </lineage>
</organism>
<proteinExistence type="inferred from homology"/>
<evidence type="ECO:0000255" key="1">
    <source>
        <dbReference type="HAMAP-Rule" id="MF_00170"/>
    </source>
</evidence>
<protein>
    <recommendedName>
        <fullName evidence="1">Ribose-5-phosphate isomerase A</fullName>
        <ecNumber evidence="1">5.3.1.6</ecNumber>
    </recommendedName>
    <alternativeName>
        <fullName evidence="1">Phosphoriboisomerase A</fullName>
        <shortName evidence="1">PRI</shortName>
    </alternativeName>
</protein>
<gene>
    <name evidence="1" type="primary">rpiA</name>
    <name type="ordered locus">ABAYE1650</name>
</gene>
<name>RPIA_ACIBY</name>